<dbReference type="EC" id="5.3.1.9" evidence="1"/>
<dbReference type="EMBL" id="CP000285">
    <property type="protein sequence ID" value="ABE58289.1"/>
    <property type="molecule type" value="Genomic_DNA"/>
</dbReference>
<dbReference type="RefSeq" id="WP_011506235.1">
    <property type="nucleotide sequence ID" value="NC_007963.1"/>
</dbReference>
<dbReference type="SMR" id="Q1QZ19"/>
<dbReference type="STRING" id="290398.Csal_0932"/>
<dbReference type="GeneID" id="95333688"/>
<dbReference type="KEGG" id="csa:Csal_0932"/>
<dbReference type="eggNOG" id="COG0166">
    <property type="taxonomic scope" value="Bacteria"/>
</dbReference>
<dbReference type="HOGENOM" id="CLU_017947_3_1_6"/>
<dbReference type="OrthoDB" id="140919at2"/>
<dbReference type="UniPathway" id="UPA00109">
    <property type="reaction ID" value="UER00181"/>
</dbReference>
<dbReference type="UniPathway" id="UPA00138"/>
<dbReference type="Proteomes" id="UP000000239">
    <property type="component" value="Chromosome"/>
</dbReference>
<dbReference type="GO" id="GO:0005829">
    <property type="term" value="C:cytosol"/>
    <property type="evidence" value="ECO:0007669"/>
    <property type="project" value="TreeGrafter"/>
</dbReference>
<dbReference type="GO" id="GO:0097367">
    <property type="term" value="F:carbohydrate derivative binding"/>
    <property type="evidence" value="ECO:0007669"/>
    <property type="project" value="InterPro"/>
</dbReference>
<dbReference type="GO" id="GO:0004347">
    <property type="term" value="F:glucose-6-phosphate isomerase activity"/>
    <property type="evidence" value="ECO:0007669"/>
    <property type="project" value="UniProtKB-UniRule"/>
</dbReference>
<dbReference type="GO" id="GO:0048029">
    <property type="term" value="F:monosaccharide binding"/>
    <property type="evidence" value="ECO:0007669"/>
    <property type="project" value="TreeGrafter"/>
</dbReference>
<dbReference type="GO" id="GO:0006094">
    <property type="term" value="P:gluconeogenesis"/>
    <property type="evidence" value="ECO:0007669"/>
    <property type="project" value="UniProtKB-UniRule"/>
</dbReference>
<dbReference type="GO" id="GO:0051156">
    <property type="term" value="P:glucose 6-phosphate metabolic process"/>
    <property type="evidence" value="ECO:0007669"/>
    <property type="project" value="TreeGrafter"/>
</dbReference>
<dbReference type="GO" id="GO:0006096">
    <property type="term" value="P:glycolytic process"/>
    <property type="evidence" value="ECO:0007669"/>
    <property type="project" value="UniProtKB-UniRule"/>
</dbReference>
<dbReference type="CDD" id="cd05015">
    <property type="entry name" value="SIS_PGI_1"/>
    <property type="match status" value="1"/>
</dbReference>
<dbReference type="CDD" id="cd05016">
    <property type="entry name" value="SIS_PGI_2"/>
    <property type="match status" value="1"/>
</dbReference>
<dbReference type="FunFam" id="3.40.50.10490:FF:000004">
    <property type="entry name" value="Glucose-6-phosphate isomerase"/>
    <property type="match status" value="1"/>
</dbReference>
<dbReference type="Gene3D" id="1.10.1390.10">
    <property type="match status" value="1"/>
</dbReference>
<dbReference type="Gene3D" id="3.40.50.10490">
    <property type="entry name" value="Glucose-6-phosphate isomerase like protein, domain 1"/>
    <property type="match status" value="2"/>
</dbReference>
<dbReference type="HAMAP" id="MF_00473">
    <property type="entry name" value="G6P_isomerase"/>
    <property type="match status" value="1"/>
</dbReference>
<dbReference type="InterPro" id="IPR001672">
    <property type="entry name" value="G6P_Isomerase"/>
</dbReference>
<dbReference type="InterPro" id="IPR023096">
    <property type="entry name" value="G6P_Isomerase_C"/>
</dbReference>
<dbReference type="InterPro" id="IPR018189">
    <property type="entry name" value="Phosphoglucose_isomerase_CS"/>
</dbReference>
<dbReference type="InterPro" id="IPR046348">
    <property type="entry name" value="SIS_dom_sf"/>
</dbReference>
<dbReference type="InterPro" id="IPR035476">
    <property type="entry name" value="SIS_PGI_1"/>
</dbReference>
<dbReference type="InterPro" id="IPR035482">
    <property type="entry name" value="SIS_PGI_2"/>
</dbReference>
<dbReference type="NCBIfam" id="NF001211">
    <property type="entry name" value="PRK00179.1"/>
    <property type="match status" value="1"/>
</dbReference>
<dbReference type="PANTHER" id="PTHR11469">
    <property type="entry name" value="GLUCOSE-6-PHOSPHATE ISOMERASE"/>
    <property type="match status" value="1"/>
</dbReference>
<dbReference type="PANTHER" id="PTHR11469:SF1">
    <property type="entry name" value="GLUCOSE-6-PHOSPHATE ISOMERASE"/>
    <property type="match status" value="1"/>
</dbReference>
<dbReference type="Pfam" id="PF00342">
    <property type="entry name" value="PGI"/>
    <property type="match status" value="1"/>
</dbReference>
<dbReference type="PRINTS" id="PR00662">
    <property type="entry name" value="G6PISOMERASE"/>
</dbReference>
<dbReference type="SUPFAM" id="SSF53697">
    <property type="entry name" value="SIS domain"/>
    <property type="match status" value="1"/>
</dbReference>
<dbReference type="PROSITE" id="PS00765">
    <property type="entry name" value="P_GLUCOSE_ISOMERASE_1"/>
    <property type="match status" value="1"/>
</dbReference>
<dbReference type="PROSITE" id="PS00174">
    <property type="entry name" value="P_GLUCOSE_ISOMERASE_2"/>
    <property type="match status" value="1"/>
</dbReference>
<dbReference type="PROSITE" id="PS51463">
    <property type="entry name" value="P_GLUCOSE_ISOMERASE_3"/>
    <property type="match status" value="1"/>
</dbReference>
<organism>
    <name type="scientific">Chromohalobacter salexigens (strain ATCC BAA-138 / DSM 3043 / CIP 106854 / NCIMB 13768 / 1H11)</name>
    <dbReference type="NCBI Taxonomy" id="290398"/>
    <lineage>
        <taxon>Bacteria</taxon>
        <taxon>Pseudomonadati</taxon>
        <taxon>Pseudomonadota</taxon>
        <taxon>Gammaproteobacteria</taxon>
        <taxon>Oceanospirillales</taxon>
        <taxon>Halomonadaceae</taxon>
        <taxon>Chromohalobacter</taxon>
    </lineage>
</organism>
<reference key="1">
    <citation type="journal article" date="2011" name="Stand. Genomic Sci.">
        <title>Complete genome sequence of the halophilic and highly halotolerant Chromohalobacter salexigens type strain (1H11(T)).</title>
        <authorList>
            <person name="Copeland A."/>
            <person name="O'Connor K."/>
            <person name="Lucas S."/>
            <person name="Lapidus A."/>
            <person name="Berry K.W."/>
            <person name="Detter J.C."/>
            <person name="Del Rio T.G."/>
            <person name="Hammon N."/>
            <person name="Dalin E."/>
            <person name="Tice H."/>
            <person name="Pitluck S."/>
            <person name="Bruce D."/>
            <person name="Goodwin L."/>
            <person name="Han C."/>
            <person name="Tapia R."/>
            <person name="Saunders E."/>
            <person name="Schmutz J."/>
            <person name="Brettin T."/>
            <person name="Larimer F."/>
            <person name="Land M."/>
            <person name="Hauser L."/>
            <person name="Vargas C."/>
            <person name="Nieto J.J."/>
            <person name="Kyrpides N.C."/>
            <person name="Ivanova N."/>
            <person name="Goker M."/>
            <person name="Klenk H.P."/>
            <person name="Csonka L.N."/>
            <person name="Woyke T."/>
        </authorList>
    </citation>
    <scope>NUCLEOTIDE SEQUENCE [LARGE SCALE GENOMIC DNA]</scope>
    <source>
        <strain>ATCC BAA-138 / DSM 3043 / CIP 106854 / NCIMB 13768 / 1H11</strain>
    </source>
</reference>
<keyword id="KW-0963">Cytoplasm</keyword>
<keyword id="KW-0312">Gluconeogenesis</keyword>
<keyword id="KW-0324">Glycolysis</keyword>
<keyword id="KW-0413">Isomerase</keyword>
<keyword id="KW-1185">Reference proteome</keyword>
<proteinExistence type="inferred from homology"/>
<protein>
    <recommendedName>
        <fullName evidence="1">Glucose-6-phosphate isomerase 1</fullName>
        <shortName evidence="1">GPI 1</shortName>
        <ecNumber evidence="1">5.3.1.9</ecNumber>
    </recommendedName>
    <alternativeName>
        <fullName evidence="1">Phosphoglucose isomerase 1</fullName>
        <shortName evidence="1">PGI 1</shortName>
    </alternativeName>
    <alternativeName>
        <fullName evidence="1">Phosphohexose isomerase 1</fullName>
        <shortName evidence="1">PHI 1</shortName>
    </alternativeName>
</protein>
<feature type="chain" id="PRO_0000252615" description="Glucose-6-phosphate isomerase 1">
    <location>
        <begin position="1"/>
        <end position="548"/>
    </location>
</feature>
<feature type="active site" description="Proton donor" evidence="1">
    <location>
        <position position="353"/>
    </location>
</feature>
<feature type="active site" evidence="1">
    <location>
        <position position="384"/>
    </location>
</feature>
<feature type="active site" evidence="1">
    <location>
        <position position="495"/>
    </location>
</feature>
<gene>
    <name evidence="1" type="primary">pgi1</name>
    <name type="ordered locus">Csal_0932</name>
</gene>
<comment type="function">
    <text evidence="1">Catalyzes the reversible isomerization of glucose-6-phosphate to fructose-6-phosphate.</text>
</comment>
<comment type="catalytic activity">
    <reaction evidence="1">
        <text>alpha-D-glucose 6-phosphate = beta-D-fructose 6-phosphate</text>
        <dbReference type="Rhea" id="RHEA:11816"/>
        <dbReference type="ChEBI" id="CHEBI:57634"/>
        <dbReference type="ChEBI" id="CHEBI:58225"/>
        <dbReference type="EC" id="5.3.1.9"/>
    </reaction>
</comment>
<comment type="pathway">
    <text evidence="1">Carbohydrate biosynthesis; gluconeogenesis.</text>
</comment>
<comment type="pathway">
    <text evidence="1">Carbohydrate degradation; glycolysis; D-glyceraldehyde 3-phosphate and glycerone phosphate from D-glucose: step 2/4.</text>
</comment>
<comment type="subcellular location">
    <subcellularLocation>
        <location evidence="1">Cytoplasm</location>
    </subcellularLocation>
</comment>
<comment type="similarity">
    <text evidence="1">Belongs to the GPI family.</text>
</comment>
<sequence length="548" mass="61466">MFQLTRSVTWRALERLKQETFDDRISDYFAADPQRFEKMSLRVGGLFLDYSKHHVSDAVLAKLIELADHSALVQRRAQMFSGDIINVTEDRPVLHTALRHLGDEPVYADGKDVMPEIQSTREQIKRFSEAVRSGEWKGYSGERIKDVVNIGIGGSDLGPNMACRALLKYRHPELNFHFVSNVDGTHIQKVLQRLDPATTLFIVSTKTFSTQETLLNAKTARRWFLDNAGEDADVGAHFIAASTNRKAAMEFGIREENVFEFWAWVGGRYSMWSSIGLPIALSIGFDGFMELLEGAHEMDRHFIEAPFAENMPVLMALIGIWYINFIGAETHAIVPYDQALHQLPSFLQQLDMESNGKSVDIFDQPVNYKTGPIVWGQTGSNGQHAFFQLLHQGTRYVPIDFIASLKPEPGFEDHHFALLTNMLAQANAFMEGSQDGSQLDPYSCPGNRPSSTLLLDELTPRNLGALIALYEHKVFVQGVIWNINSFDQWGVQLGKRIAGEISERIDTNVGDFDASTQGLLSLVREYFPASTPDAKASDNNKKSRGKTS</sequence>
<evidence type="ECO:0000255" key="1">
    <source>
        <dbReference type="HAMAP-Rule" id="MF_00473"/>
    </source>
</evidence>
<accession>Q1QZ19</accession>
<name>G6PI1_CHRSD</name>